<feature type="chain" id="PRO_1000076300" description="Protein NrdI">
    <location>
        <begin position="1"/>
        <end position="136"/>
    </location>
</feature>
<gene>
    <name evidence="1" type="primary">nrdI</name>
    <name type="ordered locus">SARI_00167</name>
</gene>
<accession>A9MG06</accession>
<dbReference type="EMBL" id="CP000880">
    <property type="protein sequence ID" value="ABX20114.1"/>
    <property type="molecule type" value="Genomic_DNA"/>
</dbReference>
<dbReference type="SMR" id="A9MG06"/>
<dbReference type="STRING" id="41514.SARI_00167"/>
<dbReference type="KEGG" id="ses:SARI_00167"/>
<dbReference type="HOGENOM" id="CLU_114845_0_0_6"/>
<dbReference type="Proteomes" id="UP000002084">
    <property type="component" value="Chromosome"/>
</dbReference>
<dbReference type="GO" id="GO:0010181">
    <property type="term" value="F:FMN binding"/>
    <property type="evidence" value="ECO:0007669"/>
    <property type="project" value="InterPro"/>
</dbReference>
<dbReference type="GO" id="GO:0036211">
    <property type="term" value="P:protein modification process"/>
    <property type="evidence" value="ECO:0007669"/>
    <property type="project" value="InterPro"/>
</dbReference>
<dbReference type="FunFam" id="3.40.50.360:FF:000005">
    <property type="entry name" value="Protein NrdI"/>
    <property type="match status" value="1"/>
</dbReference>
<dbReference type="Gene3D" id="3.40.50.360">
    <property type="match status" value="1"/>
</dbReference>
<dbReference type="HAMAP" id="MF_00128">
    <property type="entry name" value="NrdI"/>
    <property type="match status" value="1"/>
</dbReference>
<dbReference type="InterPro" id="IPR029039">
    <property type="entry name" value="Flavoprotein-like_sf"/>
</dbReference>
<dbReference type="InterPro" id="IPR020852">
    <property type="entry name" value="RNR_Ib_NrdI_bac"/>
</dbReference>
<dbReference type="InterPro" id="IPR004465">
    <property type="entry name" value="RNR_NrdI"/>
</dbReference>
<dbReference type="NCBIfam" id="TIGR00333">
    <property type="entry name" value="nrdI"/>
    <property type="match status" value="1"/>
</dbReference>
<dbReference type="PANTHER" id="PTHR37297">
    <property type="entry name" value="PROTEIN NRDI"/>
    <property type="match status" value="1"/>
</dbReference>
<dbReference type="PANTHER" id="PTHR37297:SF1">
    <property type="entry name" value="PROTEIN NRDI"/>
    <property type="match status" value="1"/>
</dbReference>
<dbReference type="Pfam" id="PF07972">
    <property type="entry name" value="Flavodoxin_NdrI"/>
    <property type="match status" value="1"/>
</dbReference>
<dbReference type="PIRSF" id="PIRSF005087">
    <property type="entry name" value="NrdI"/>
    <property type="match status" value="1"/>
</dbReference>
<dbReference type="SUPFAM" id="SSF52218">
    <property type="entry name" value="Flavoproteins"/>
    <property type="match status" value="1"/>
</dbReference>
<organism>
    <name type="scientific">Salmonella arizonae (strain ATCC BAA-731 / CDC346-86 / RSK2980)</name>
    <dbReference type="NCBI Taxonomy" id="41514"/>
    <lineage>
        <taxon>Bacteria</taxon>
        <taxon>Pseudomonadati</taxon>
        <taxon>Pseudomonadota</taxon>
        <taxon>Gammaproteobacteria</taxon>
        <taxon>Enterobacterales</taxon>
        <taxon>Enterobacteriaceae</taxon>
        <taxon>Salmonella</taxon>
    </lineage>
</organism>
<evidence type="ECO:0000255" key="1">
    <source>
        <dbReference type="HAMAP-Rule" id="MF_00128"/>
    </source>
</evidence>
<name>NRDI_SALAR</name>
<reference key="1">
    <citation type="submission" date="2007-11" db="EMBL/GenBank/DDBJ databases">
        <authorList>
            <consortium name="The Salmonella enterica serovar Arizonae Genome Sequencing Project"/>
            <person name="McClelland M."/>
            <person name="Sanderson E.K."/>
            <person name="Porwollik S."/>
            <person name="Spieth J."/>
            <person name="Clifton W.S."/>
            <person name="Fulton R."/>
            <person name="Chunyan W."/>
            <person name="Wollam A."/>
            <person name="Shah N."/>
            <person name="Pepin K."/>
            <person name="Bhonagiri V."/>
            <person name="Nash W."/>
            <person name="Johnson M."/>
            <person name="Thiruvilangam P."/>
            <person name="Wilson R."/>
        </authorList>
    </citation>
    <scope>NUCLEOTIDE SEQUENCE [LARGE SCALE GENOMIC DNA]</scope>
    <source>
        <strain>ATCC BAA-731 / CDC346-86 / RSK2980</strain>
    </source>
</reference>
<protein>
    <recommendedName>
        <fullName evidence="1">Protein NrdI</fullName>
    </recommendedName>
</protein>
<keyword id="KW-1185">Reference proteome</keyword>
<sequence length="136" mass="15423">MSALVYFSSSSENTHRFMQRLGLPATRIPLNERERIRVDEPYILVVPSYGGGGMAGAVPRQVIRFLNDEHNRARIRGVIASGNRNFGDAWGCAGDVIAQKCGVPWLYRFELMGTQRDIDHVRKGVNEFWRQQTRSA</sequence>
<comment type="function">
    <text evidence="1">Probably involved in ribonucleotide reductase function.</text>
</comment>
<comment type="similarity">
    <text evidence="1">Belongs to the NrdI family.</text>
</comment>
<proteinExistence type="inferred from homology"/>